<protein>
    <recommendedName>
        <fullName evidence="1">Large ribosomal subunit protein bL28</fullName>
    </recommendedName>
    <alternativeName>
        <fullName evidence="2">50S ribosomal protein L28</fullName>
    </alternativeName>
</protein>
<organism>
    <name type="scientific">Glaesserella parasuis serovar 5 (strain SH0165)</name>
    <name type="common">Haemophilus parasuis</name>
    <dbReference type="NCBI Taxonomy" id="557723"/>
    <lineage>
        <taxon>Bacteria</taxon>
        <taxon>Pseudomonadati</taxon>
        <taxon>Pseudomonadota</taxon>
        <taxon>Gammaproteobacteria</taxon>
        <taxon>Pasteurellales</taxon>
        <taxon>Pasteurellaceae</taxon>
        <taxon>Glaesserella</taxon>
    </lineage>
</organism>
<gene>
    <name evidence="1" type="primary">rpmB</name>
    <name type="ordered locus">HAPS_2050</name>
</gene>
<sequence>MSRVCQVTGKRPVVGNNRSHAMNATKRRFLPNLHTHRFWVESENRFVTLRLTAKGMRIIDKKGIDAVLAEIRARGEKI</sequence>
<proteinExistence type="inferred from homology"/>
<comment type="similarity">
    <text evidence="1">Belongs to the bacterial ribosomal protein bL28 family.</text>
</comment>
<reference key="1">
    <citation type="journal article" date="2009" name="J. Bacteriol.">
        <title>Complete genome sequence of Haemophilus parasuis SH0165.</title>
        <authorList>
            <person name="Yue M."/>
            <person name="Yang F."/>
            <person name="Yang J."/>
            <person name="Bei W."/>
            <person name="Cai X."/>
            <person name="Chen L."/>
            <person name="Dong J."/>
            <person name="Zhou R."/>
            <person name="Jin M."/>
            <person name="Jin Q."/>
            <person name="Chen H."/>
        </authorList>
    </citation>
    <scope>NUCLEOTIDE SEQUENCE [LARGE SCALE GENOMIC DNA]</scope>
    <source>
        <strain>SH0165</strain>
    </source>
</reference>
<name>RL28_GLAP5</name>
<keyword id="KW-1185">Reference proteome</keyword>
<keyword id="KW-0687">Ribonucleoprotein</keyword>
<keyword id="KW-0689">Ribosomal protein</keyword>
<evidence type="ECO:0000255" key="1">
    <source>
        <dbReference type="HAMAP-Rule" id="MF_00373"/>
    </source>
</evidence>
<evidence type="ECO:0000305" key="2"/>
<dbReference type="EMBL" id="CP001321">
    <property type="protein sequence ID" value="ACL33510.1"/>
    <property type="molecule type" value="Genomic_DNA"/>
</dbReference>
<dbReference type="RefSeq" id="WP_005713177.1">
    <property type="nucleotide sequence ID" value="NC_011852.1"/>
</dbReference>
<dbReference type="SMR" id="B8F858"/>
<dbReference type="STRING" id="557723.HAPS_2050"/>
<dbReference type="GeneID" id="66619324"/>
<dbReference type="KEGG" id="hap:HAPS_2050"/>
<dbReference type="HOGENOM" id="CLU_064548_3_1_6"/>
<dbReference type="Proteomes" id="UP000006743">
    <property type="component" value="Chromosome"/>
</dbReference>
<dbReference type="GO" id="GO:0022625">
    <property type="term" value="C:cytosolic large ribosomal subunit"/>
    <property type="evidence" value="ECO:0007669"/>
    <property type="project" value="TreeGrafter"/>
</dbReference>
<dbReference type="GO" id="GO:0003735">
    <property type="term" value="F:structural constituent of ribosome"/>
    <property type="evidence" value="ECO:0007669"/>
    <property type="project" value="InterPro"/>
</dbReference>
<dbReference type="GO" id="GO:0006412">
    <property type="term" value="P:translation"/>
    <property type="evidence" value="ECO:0007669"/>
    <property type="project" value="UniProtKB-UniRule"/>
</dbReference>
<dbReference type="FunFam" id="2.30.170.40:FF:000001">
    <property type="entry name" value="50S ribosomal protein L28"/>
    <property type="match status" value="1"/>
</dbReference>
<dbReference type="Gene3D" id="2.30.170.40">
    <property type="entry name" value="Ribosomal protein L28/L24"/>
    <property type="match status" value="1"/>
</dbReference>
<dbReference type="HAMAP" id="MF_00373">
    <property type="entry name" value="Ribosomal_bL28"/>
    <property type="match status" value="1"/>
</dbReference>
<dbReference type="InterPro" id="IPR026569">
    <property type="entry name" value="Ribosomal_bL28"/>
</dbReference>
<dbReference type="InterPro" id="IPR034704">
    <property type="entry name" value="Ribosomal_bL28/bL31-like_sf"/>
</dbReference>
<dbReference type="InterPro" id="IPR001383">
    <property type="entry name" value="Ribosomal_bL28_bact-type"/>
</dbReference>
<dbReference type="InterPro" id="IPR037147">
    <property type="entry name" value="Ribosomal_bL28_sf"/>
</dbReference>
<dbReference type="NCBIfam" id="TIGR00009">
    <property type="entry name" value="L28"/>
    <property type="match status" value="1"/>
</dbReference>
<dbReference type="PANTHER" id="PTHR13528">
    <property type="entry name" value="39S RIBOSOMAL PROTEIN L28, MITOCHONDRIAL"/>
    <property type="match status" value="1"/>
</dbReference>
<dbReference type="PANTHER" id="PTHR13528:SF2">
    <property type="entry name" value="LARGE RIBOSOMAL SUBUNIT PROTEIN BL28M"/>
    <property type="match status" value="1"/>
</dbReference>
<dbReference type="Pfam" id="PF00830">
    <property type="entry name" value="Ribosomal_L28"/>
    <property type="match status" value="1"/>
</dbReference>
<dbReference type="SUPFAM" id="SSF143800">
    <property type="entry name" value="L28p-like"/>
    <property type="match status" value="1"/>
</dbReference>
<accession>B8F858</accession>
<feature type="chain" id="PRO_1000195926" description="Large ribosomal subunit protein bL28">
    <location>
        <begin position="1"/>
        <end position="78"/>
    </location>
</feature>